<protein>
    <recommendedName>
        <fullName evidence="1">Small ribosomal subunit protein uS14c</fullName>
    </recommendedName>
    <alternativeName>
        <fullName evidence="2">30S ribosomal protein S14, chloroplastic</fullName>
    </alternativeName>
</protein>
<organism>
    <name type="scientific">Gossypium barbadense</name>
    <name type="common">Sea Island cotton</name>
    <name type="synonym">Hibiscus barbadensis</name>
    <dbReference type="NCBI Taxonomy" id="3634"/>
    <lineage>
        <taxon>Eukaryota</taxon>
        <taxon>Viridiplantae</taxon>
        <taxon>Streptophyta</taxon>
        <taxon>Embryophyta</taxon>
        <taxon>Tracheophyta</taxon>
        <taxon>Spermatophyta</taxon>
        <taxon>Magnoliopsida</taxon>
        <taxon>eudicotyledons</taxon>
        <taxon>Gunneridae</taxon>
        <taxon>Pentapetalae</taxon>
        <taxon>rosids</taxon>
        <taxon>malvids</taxon>
        <taxon>Malvales</taxon>
        <taxon>Malvaceae</taxon>
        <taxon>Malvoideae</taxon>
        <taxon>Gossypium</taxon>
    </lineage>
</organism>
<geneLocation type="chloroplast"/>
<accession>A0ZZ33</accession>
<feature type="chain" id="PRO_0000276678" description="Small ribosomal subunit protein uS14c">
    <location>
        <begin position="1"/>
        <end position="100"/>
    </location>
</feature>
<comment type="function">
    <text evidence="1">Binds 16S rRNA, required for the assembly of 30S particles.</text>
</comment>
<comment type="subunit">
    <text evidence="1">Part of the 30S ribosomal subunit.</text>
</comment>
<comment type="subcellular location">
    <subcellularLocation>
        <location>Plastid</location>
        <location>Chloroplast</location>
    </subcellularLocation>
</comment>
<comment type="similarity">
    <text evidence="1">Belongs to the universal ribosomal protein uS14 family.</text>
</comment>
<reference key="1">
    <citation type="journal article" date="2006" name="Genes Genet. Syst.">
        <title>Complete nucleotide sequence of the cotton (Gossypium barbadense L.) chloroplast genome with a comparative analysis of sequences among 9 dicot plants.</title>
        <authorList>
            <person name="Ibrahim R.I.H."/>
            <person name="Azuma J."/>
            <person name="Sakamoto M."/>
        </authorList>
    </citation>
    <scope>NUCLEOTIDE SEQUENCE [LARGE SCALE GENOMIC DNA]</scope>
</reference>
<dbReference type="EMBL" id="AP009123">
    <property type="protein sequence ID" value="BAF41245.1"/>
    <property type="molecule type" value="Genomic_DNA"/>
</dbReference>
<dbReference type="RefSeq" id="YP_913185.1">
    <property type="nucleotide sequence ID" value="NC_008641.1"/>
</dbReference>
<dbReference type="SMR" id="A0ZZ33"/>
<dbReference type="GeneID" id="4575249"/>
<dbReference type="GO" id="GO:0009507">
    <property type="term" value="C:chloroplast"/>
    <property type="evidence" value="ECO:0007669"/>
    <property type="project" value="UniProtKB-SubCell"/>
</dbReference>
<dbReference type="GO" id="GO:0015935">
    <property type="term" value="C:small ribosomal subunit"/>
    <property type="evidence" value="ECO:0007669"/>
    <property type="project" value="TreeGrafter"/>
</dbReference>
<dbReference type="GO" id="GO:0019843">
    <property type="term" value="F:rRNA binding"/>
    <property type="evidence" value="ECO:0007669"/>
    <property type="project" value="UniProtKB-UniRule"/>
</dbReference>
<dbReference type="GO" id="GO:0003735">
    <property type="term" value="F:structural constituent of ribosome"/>
    <property type="evidence" value="ECO:0007669"/>
    <property type="project" value="InterPro"/>
</dbReference>
<dbReference type="GO" id="GO:0006412">
    <property type="term" value="P:translation"/>
    <property type="evidence" value="ECO:0007669"/>
    <property type="project" value="UniProtKB-UniRule"/>
</dbReference>
<dbReference type="FunFam" id="1.10.287.1480:FF:000001">
    <property type="entry name" value="30S ribosomal protein S14"/>
    <property type="match status" value="1"/>
</dbReference>
<dbReference type="Gene3D" id="1.10.287.1480">
    <property type="match status" value="1"/>
</dbReference>
<dbReference type="HAMAP" id="MF_00537">
    <property type="entry name" value="Ribosomal_uS14_1"/>
    <property type="match status" value="1"/>
</dbReference>
<dbReference type="InterPro" id="IPR001209">
    <property type="entry name" value="Ribosomal_uS14"/>
</dbReference>
<dbReference type="InterPro" id="IPR023036">
    <property type="entry name" value="Ribosomal_uS14_bac/plastid"/>
</dbReference>
<dbReference type="InterPro" id="IPR018271">
    <property type="entry name" value="Ribosomal_uS14_CS"/>
</dbReference>
<dbReference type="NCBIfam" id="NF006477">
    <property type="entry name" value="PRK08881.1"/>
    <property type="match status" value="1"/>
</dbReference>
<dbReference type="PANTHER" id="PTHR19836">
    <property type="entry name" value="30S RIBOSOMAL PROTEIN S14"/>
    <property type="match status" value="1"/>
</dbReference>
<dbReference type="PANTHER" id="PTHR19836:SF19">
    <property type="entry name" value="SMALL RIBOSOMAL SUBUNIT PROTEIN US14M"/>
    <property type="match status" value="1"/>
</dbReference>
<dbReference type="Pfam" id="PF00253">
    <property type="entry name" value="Ribosomal_S14"/>
    <property type="match status" value="1"/>
</dbReference>
<dbReference type="SUPFAM" id="SSF57716">
    <property type="entry name" value="Glucocorticoid receptor-like (DNA-binding domain)"/>
    <property type="match status" value="1"/>
</dbReference>
<dbReference type="PROSITE" id="PS00527">
    <property type="entry name" value="RIBOSOMAL_S14"/>
    <property type="match status" value="1"/>
</dbReference>
<keyword id="KW-0150">Chloroplast</keyword>
<keyword id="KW-0934">Plastid</keyword>
<keyword id="KW-0687">Ribonucleoprotein</keyword>
<keyword id="KW-0689">Ribosomal protein</keyword>
<keyword id="KW-0694">RNA-binding</keyword>
<keyword id="KW-0699">rRNA-binding</keyword>
<evidence type="ECO:0000255" key="1">
    <source>
        <dbReference type="HAMAP-Rule" id="MF_00537"/>
    </source>
</evidence>
<evidence type="ECO:0000305" key="2"/>
<gene>
    <name evidence="1" type="primary">rps14</name>
</gene>
<proteinExistence type="inferred from homology"/>
<name>RR14_GOSBA</name>
<sequence length="100" mass="11702">MAKKSLIHREKKRQKLEQKYHLIRRSSKKEISKVPSLSEKWKIHGKLQSSPRNSAPTRLHRRCFSTGRPRANYRDFGLSGHILREMVHACLLPGATRSSW</sequence>